<comment type="function">
    <text evidence="1">Required for the assembly of the ubiquinol-cytochrome c reductase complex (mitochondrial respiratory chain complex III or cytochrome b-c1 complex), mediating cytochrome b recruitment and probably stabilization within the complex. Thereby, plays an important role in ATP production by mitochondria. Cardiolipin-binding protein, it may also control the cardiolipin composition of mitochondria membranes and their morphology.</text>
</comment>
<comment type="subunit">
    <text evidence="1 3">Associates with the ubiquinol-cytochrome c reductase complex (mitochondrial respiratory chain complex III(CIII) or cytochrome b-c1 complex). Interacts with UQCC1 (PubMed:35977508). Forms a complex, named COMC, composed of UQCC1, UQCC2; UQCC3 and UQCC4; mediates MT-CYB hemylation and association with the first nuclear-encoded complex III subunit UQCRQ (PubMed:35977508).</text>
</comment>
<comment type="subcellular location">
    <subcellularLocation>
        <location evidence="1">Mitochondrion inner membrane</location>
        <topology evidence="2">Single-pass membrane protein</topology>
    </subcellularLocation>
</comment>
<comment type="PTM">
    <text evidence="1">Probably cleaved by OMA1 under mitochondrial stress conditions.</text>
</comment>
<comment type="similarity">
    <text evidence="4">Belongs to the UQCC3 family.</text>
</comment>
<sequence>MEVARKALVAVAVLGGGAGVGSILFALVTPGELQKQSMLQEMPERDSRRRDEAVRTTELVMATLKDAAATKENVAWRRNWTVSGDGRSA</sequence>
<feature type="chain" id="PRO_0000022612" description="Ubiquinol-cytochrome-c reductase complex assembly factor 3">
    <location>
        <begin position="1"/>
        <end position="89"/>
    </location>
</feature>
<feature type="topological domain" description="Mitochondrial matrix" evidence="1">
    <location>
        <begin position="1"/>
        <end position="7"/>
    </location>
</feature>
<feature type="transmembrane region" description="Helical" evidence="2">
    <location>
        <begin position="8"/>
        <end position="28"/>
    </location>
</feature>
<feature type="topological domain" description="Mitochondrial intermembrane" evidence="1">
    <location>
        <begin position="29"/>
        <end position="89"/>
    </location>
</feature>
<feature type="region of interest" description="Mediates lipid-binding" evidence="1">
    <location>
        <begin position="23"/>
        <end position="80"/>
    </location>
</feature>
<proteinExistence type="evidence at protein level"/>
<protein>
    <recommendedName>
        <fullName evidence="1">Ubiquinol-cytochrome-c reductase complex assembly factor 3</fullName>
    </recommendedName>
</protein>
<reference key="1">
    <citation type="journal article" date="2004" name="Genome Res.">
        <title>The status, quality, and expansion of the NIH full-length cDNA project: the Mammalian Gene Collection (MGC).</title>
        <authorList>
            <consortium name="The MGC Project Team"/>
        </authorList>
    </citation>
    <scope>NUCLEOTIDE SEQUENCE [LARGE SCALE MRNA]</scope>
    <source>
        <strain>FVB/N</strain>
        <tissue>Mammary tumor</tissue>
    </source>
</reference>
<reference key="2">
    <citation type="journal article" date="2010" name="Cell">
        <title>A tissue-specific atlas of mouse protein phosphorylation and expression.</title>
        <authorList>
            <person name="Huttlin E.L."/>
            <person name="Jedrychowski M.P."/>
            <person name="Elias J.E."/>
            <person name="Goswami T."/>
            <person name="Rad R."/>
            <person name="Beausoleil S.A."/>
            <person name="Villen J."/>
            <person name="Haas W."/>
            <person name="Sowa M.E."/>
            <person name="Gygi S.P."/>
        </authorList>
    </citation>
    <scope>IDENTIFICATION BY MASS SPECTROMETRY [LARGE SCALE ANALYSIS]</scope>
    <source>
        <tissue>Brain</tissue>
        <tissue>Brown adipose tissue</tissue>
        <tissue>Liver</tissue>
        <tissue>Testis</tissue>
    </source>
</reference>
<reference key="3">
    <citation type="journal article" date="2022" name="Cell Rep.">
        <title>Mitochondrial microproteins link metabolic cues to respiratory chain biogenesis.</title>
        <authorList>
            <person name="Liang C."/>
            <person name="Zhang S."/>
            <person name="Robinson D."/>
            <person name="Ploeg M.V."/>
            <person name="Wilson R."/>
            <person name="Nah J."/>
            <person name="Taylor D."/>
            <person name="Beh S."/>
            <person name="Lim R."/>
            <person name="Sun L."/>
            <person name="Muoio D.M."/>
            <person name="Stroud D.A."/>
            <person name="Ho L."/>
        </authorList>
    </citation>
    <scope>SUBUNIT</scope>
    <scope>INTERACTION WITH UQCC1</scope>
</reference>
<keyword id="KW-0066">ATP synthesis</keyword>
<keyword id="KW-0472">Membrane</keyword>
<keyword id="KW-0496">Mitochondrion</keyword>
<keyword id="KW-0999">Mitochondrion inner membrane</keyword>
<keyword id="KW-1185">Reference proteome</keyword>
<keyword id="KW-0812">Transmembrane</keyword>
<keyword id="KW-1133">Transmembrane helix</keyword>
<gene>
    <name evidence="1" type="primary">Uqcc3</name>
</gene>
<name>UQCC3_MOUSE</name>
<evidence type="ECO:0000250" key="1">
    <source>
        <dbReference type="UniProtKB" id="Q6UW78"/>
    </source>
</evidence>
<evidence type="ECO:0000255" key="2"/>
<evidence type="ECO:0000269" key="3">
    <source>
    </source>
</evidence>
<evidence type="ECO:0000305" key="4"/>
<accession>Q8K2T4</accession>
<dbReference type="EMBL" id="BC029863">
    <property type="protein sequence ID" value="AAH29863.1"/>
    <property type="molecule type" value="mRNA"/>
</dbReference>
<dbReference type="CCDS" id="CCDS50383.1"/>
<dbReference type="RefSeq" id="NP_001153828.1">
    <property type="nucleotide sequence ID" value="NM_001160356.1"/>
</dbReference>
<dbReference type="SMR" id="Q8K2T4"/>
<dbReference type="FunCoup" id="Q8K2T4">
    <property type="interactions" value="583"/>
</dbReference>
<dbReference type="STRING" id="10090.ENSMUSP00000093972"/>
<dbReference type="GlyGen" id="Q8K2T4">
    <property type="glycosylation" value="1 site"/>
</dbReference>
<dbReference type="iPTMnet" id="Q8K2T4"/>
<dbReference type="PhosphoSitePlus" id="Q8K2T4"/>
<dbReference type="PaxDb" id="10090-ENSMUSP00000093972"/>
<dbReference type="ProteomicsDB" id="300191"/>
<dbReference type="Pumba" id="Q8K2T4"/>
<dbReference type="Antibodypedia" id="63885">
    <property type="antibodies" value="10 antibodies from 9 providers"/>
</dbReference>
<dbReference type="Ensembl" id="ENSMUST00000096253.7">
    <property type="protein sequence ID" value="ENSMUSP00000093972.6"/>
    <property type="gene ID" value="ENSMUSG00000071654.7"/>
</dbReference>
<dbReference type="GeneID" id="107197"/>
<dbReference type="KEGG" id="mmu:107197"/>
<dbReference type="UCSC" id="uc008gnr.2">
    <property type="organism name" value="mouse"/>
</dbReference>
<dbReference type="AGR" id="MGI:2147553"/>
<dbReference type="CTD" id="790955"/>
<dbReference type="MGI" id="MGI:2147553">
    <property type="gene designation" value="Uqcc3"/>
</dbReference>
<dbReference type="VEuPathDB" id="HostDB:ENSMUSG00000071654"/>
<dbReference type="eggNOG" id="ENOG502S9VI">
    <property type="taxonomic scope" value="Eukaryota"/>
</dbReference>
<dbReference type="GeneTree" id="ENSGT00390000001930"/>
<dbReference type="HOGENOM" id="CLU_184624_0_0_1"/>
<dbReference type="InParanoid" id="Q8K2T4"/>
<dbReference type="OMA" id="THENVAW"/>
<dbReference type="OrthoDB" id="9884264at2759"/>
<dbReference type="PhylomeDB" id="Q8K2T4"/>
<dbReference type="TreeFam" id="TF339744"/>
<dbReference type="BioGRID-ORCS" id="107197">
    <property type="hits" value="7 hits in 76 CRISPR screens"/>
</dbReference>
<dbReference type="ChiTaRS" id="Uqcc3">
    <property type="organism name" value="mouse"/>
</dbReference>
<dbReference type="PRO" id="PR:Q8K2T4"/>
<dbReference type="Proteomes" id="UP000000589">
    <property type="component" value="Chromosome 19"/>
</dbReference>
<dbReference type="RNAct" id="Q8K2T4">
    <property type="molecule type" value="protein"/>
</dbReference>
<dbReference type="Bgee" id="ENSMUSG00000071654">
    <property type="expression patterns" value="Expressed in retinal neural layer and 258 other cell types or tissues"/>
</dbReference>
<dbReference type="ExpressionAtlas" id="Q8K2T4">
    <property type="expression patterns" value="baseline and differential"/>
</dbReference>
<dbReference type="GO" id="GO:0005829">
    <property type="term" value="C:cytosol"/>
    <property type="evidence" value="ECO:0007669"/>
    <property type="project" value="Ensembl"/>
</dbReference>
<dbReference type="GO" id="GO:0005743">
    <property type="term" value="C:mitochondrial inner membrane"/>
    <property type="evidence" value="ECO:0000250"/>
    <property type="project" value="UniProtKB"/>
</dbReference>
<dbReference type="GO" id="GO:0005654">
    <property type="term" value="C:nucleoplasm"/>
    <property type="evidence" value="ECO:0007669"/>
    <property type="project" value="Ensembl"/>
</dbReference>
<dbReference type="GO" id="GO:1901612">
    <property type="term" value="F:cardiolipin binding"/>
    <property type="evidence" value="ECO:0000250"/>
    <property type="project" value="UniProtKB"/>
</dbReference>
<dbReference type="GO" id="GO:0070300">
    <property type="term" value="F:phosphatidic acid binding"/>
    <property type="evidence" value="ECO:0000250"/>
    <property type="project" value="UniProtKB"/>
</dbReference>
<dbReference type="GO" id="GO:0006754">
    <property type="term" value="P:ATP biosynthetic process"/>
    <property type="evidence" value="ECO:0007669"/>
    <property type="project" value="UniProtKB-KW"/>
</dbReference>
<dbReference type="GO" id="GO:0042407">
    <property type="term" value="P:cristae formation"/>
    <property type="evidence" value="ECO:0000250"/>
    <property type="project" value="UniProtKB"/>
</dbReference>
<dbReference type="GO" id="GO:0006122">
    <property type="term" value="P:mitochondrial electron transport, ubiquinol to cytochrome c"/>
    <property type="evidence" value="ECO:0000250"/>
    <property type="project" value="UniProtKB"/>
</dbReference>
<dbReference type="GO" id="GO:0034551">
    <property type="term" value="P:mitochondrial respiratory chain complex III assembly"/>
    <property type="evidence" value="ECO:0000250"/>
    <property type="project" value="UniProtKB"/>
</dbReference>
<dbReference type="InterPro" id="IPR027896">
    <property type="entry name" value="UQCC3"/>
</dbReference>
<dbReference type="PANTHER" id="PTHR36465">
    <property type="entry name" value="UBIQUINOL-CYTOCHROME-C REDUCTASE COMPLEX ASSEMBLY FACTOR 3"/>
    <property type="match status" value="1"/>
</dbReference>
<dbReference type="PANTHER" id="PTHR36465:SF1">
    <property type="entry name" value="UBIQUINOL-CYTOCHROME-C REDUCTASE COMPLEX ASSEMBLY FACTOR 3"/>
    <property type="match status" value="1"/>
</dbReference>
<dbReference type="Pfam" id="PF15141">
    <property type="entry name" value="UQCC3"/>
    <property type="match status" value="1"/>
</dbReference>
<organism>
    <name type="scientific">Mus musculus</name>
    <name type="common">Mouse</name>
    <dbReference type="NCBI Taxonomy" id="10090"/>
    <lineage>
        <taxon>Eukaryota</taxon>
        <taxon>Metazoa</taxon>
        <taxon>Chordata</taxon>
        <taxon>Craniata</taxon>
        <taxon>Vertebrata</taxon>
        <taxon>Euteleostomi</taxon>
        <taxon>Mammalia</taxon>
        <taxon>Eutheria</taxon>
        <taxon>Euarchontoglires</taxon>
        <taxon>Glires</taxon>
        <taxon>Rodentia</taxon>
        <taxon>Myomorpha</taxon>
        <taxon>Muroidea</taxon>
        <taxon>Muridae</taxon>
        <taxon>Murinae</taxon>
        <taxon>Mus</taxon>
        <taxon>Mus</taxon>
    </lineage>
</organism>